<proteinExistence type="evidence at protein level"/>
<feature type="initiator methionine" description="Removed" evidence="17 18">
    <location>
        <position position="1"/>
    </location>
</feature>
<feature type="chain" id="PRO_0000117295" description="V-type proton ATPase subunit E 1">
    <location>
        <begin position="2"/>
        <end position="226"/>
    </location>
</feature>
<feature type="modified residue" description="N-acetylalanine" evidence="17 18">
    <location>
        <position position="2"/>
    </location>
</feature>
<feature type="modified residue" description="Phosphotyrosine" evidence="1">
    <location>
        <position position="56"/>
    </location>
</feature>
<feature type="splice variant" id="VSP_042925" description="In isoform 2." evidence="10">
    <location>
        <begin position="12"/>
        <end position="33"/>
    </location>
</feature>
<feature type="splice variant" id="VSP_044589" description="In isoform 3." evidence="10">
    <location>
        <begin position="93"/>
        <end position="122"/>
    </location>
</feature>
<feature type="sequence variant" id="VAR_036565" description="In a colorectal cancer sample; somatic mutation." evidence="5">
    <original>R</original>
    <variation>G</variation>
    <location>
        <position position="50"/>
    </location>
</feature>
<feature type="sequence variant" id="VAR_078604" description="In ARCL2C; dbSNP:rs1060505031." evidence="7">
    <original>L</original>
    <variation>P</variation>
    <location>
        <position position="128"/>
    </location>
</feature>
<feature type="sequence variant" id="VAR_078605" description="In ARCL2C; dbSNP:rs1028534806." evidence="7">
    <original>R</original>
    <variation>W</variation>
    <location>
        <position position="212"/>
    </location>
</feature>
<feature type="sequence conflict" description="In Ref. 3; CAA50592." evidence="12" ref="3">
    <original>A</original>
    <variation>R</variation>
    <location>
        <position position="32"/>
    </location>
</feature>
<feature type="sequence conflict" description="In Ref. 1; no nucleotide entry." evidence="12" ref="1">
    <original>A</original>
    <variation>G</variation>
    <location>
        <position position="86"/>
    </location>
</feature>
<feature type="strand" evidence="20">
    <location>
        <begin position="4"/>
        <end position="6"/>
    </location>
</feature>
<feature type="helix" evidence="19">
    <location>
        <begin position="35"/>
        <end position="107"/>
    </location>
</feature>
<feature type="helix" evidence="19">
    <location>
        <begin position="109"/>
        <end position="127"/>
    </location>
</feature>
<feature type="strand" evidence="19">
    <location>
        <begin position="130"/>
        <end position="135"/>
    </location>
</feature>
<feature type="helix" evidence="19">
    <location>
        <begin position="138"/>
        <end position="140"/>
    </location>
</feature>
<feature type="helix" evidence="19">
    <location>
        <begin position="141"/>
        <end position="159"/>
    </location>
</feature>
<feature type="strand" evidence="19">
    <location>
        <begin position="164"/>
        <end position="167"/>
    </location>
</feature>
<feature type="strand" evidence="20">
    <location>
        <begin position="169"/>
        <end position="171"/>
    </location>
</feature>
<feature type="strand" evidence="19">
    <location>
        <begin position="179"/>
        <end position="184"/>
    </location>
</feature>
<feature type="strand" evidence="19">
    <location>
        <begin position="188"/>
        <end position="195"/>
    </location>
</feature>
<feature type="helix" evidence="19">
    <location>
        <begin position="196"/>
        <end position="206"/>
    </location>
</feature>
<feature type="helix" evidence="19">
    <location>
        <begin position="208"/>
        <end position="216"/>
    </location>
</feature>
<dbReference type="EMBL" id="X76228">
    <property type="protein sequence ID" value="CAA53814.1"/>
    <property type="molecule type" value="mRNA"/>
</dbReference>
<dbReference type="EMBL" id="X71491">
    <property type="protein sequence ID" value="CAA50592.1"/>
    <property type="molecule type" value="mRNA"/>
</dbReference>
<dbReference type="EMBL" id="CR456385">
    <property type="protein sequence ID" value="CAG30271.1"/>
    <property type="molecule type" value="mRNA"/>
</dbReference>
<dbReference type="EMBL" id="AK294623">
    <property type="protein sequence ID" value="BAG57804.1"/>
    <property type="molecule type" value="mRNA"/>
</dbReference>
<dbReference type="EMBL" id="AK315941">
    <property type="protein sequence ID" value="BAH14312.1"/>
    <property type="molecule type" value="mRNA"/>
</dbReference>
<dbReference type="EMBL" id="AC004019">
    <property type="status" value="NOT_ANNOTATED_CDS"/>
    <property type="molecule type" value="Genomic_DNA"/>
</dbReference>
<dbReference type="EMBL" id="AC006285">
    <property type="status" value="NOT_ANNOTATED_CDS"/>
    <property type="molecule type" value="Genomic_DNA"/>
</dbReference>
<dbReference type="EMBL" id="AC007666">
    <property type="status" value="NOT_ANNOTATED_CDS"/>
    <property type="molecule type" value="Genomic_DNA"/>
</dbReference>
<dbReference type="EMBL" id="BC004443">
    <property type="protein sequence ID" value="AAH04443.1"/>
    <property type="molecule type" value="mRNA"/>
</dbReference>
<dbReference type="CCDS" id="CCDS13745.1">
    <molecule id="P36543-1"/>
</dbReference>
<dbReference type="CCDS" id="CCDS42977.1">
    <molecule id="P36543-2"/>
</dbReference>
<dbReference type="CCDS" id="CCDS42978.1">
    <molecule id="P36543-3"/>
</dbReference>
<dbReference type="PIR" id="S60562">
    <property type="entry name" value="S60562"/>
</dbReference>
<dbReference type="RefSeq" id="NP_001034455.1">
    <molecule id="P36543-2"/>
    <property type="nucleotide sequence ID" value="NM_001039366.1"/>
</dbReference>
<dbReference type="RefSeq" id="NP_001034456.1">
    <molecule id="P36543-3"/>
    <property type="nucleotide sequence ID" value="NM_001039367.1"/>
</dbReference>
<dbReference type="RefSeq" id="NP_001687.1">
    <molecule id="P36543-1"/>
    <property type="nucleotide sequence ID" value="NM_001696.4"/>
</dbReference>
<dbReference type="PDB" id="6WLZ">
    <property type="method" value="EM"/>
    <property type="resolution" value="2.90 A"/>
    <property type="chains" value="H/I/J=1-226"/>
</dbReference>
<dbReference type="PDB" id="6WM2">
    <property type="method" value="EM"/>
    <property type="resolution" value="3.10 A"/>
    <property type="chains" value="H/I/J=1-226"/>
</dbReference>
<dbReference type="PDB" id="6WM3">
    <property type="method" value="EM"/>
    <property type="resolution" value="3.40 A"/>
    <property type="chains" value="H/I/J=1-226"/>
</dbReference>
<dbReference type="PDB" id="6WM4">
    <property type="method" value="EM"/>
    <property type="resolution" value="3.60 A"/>
    <property type="chains" value="H/I/J=1-226"/>
</dbReference>
<dbReference type="PDB" id="7U4T">
    <property type="method" value="EM"/>
    <property type="resolution" value="3.60 A"/>
    <property type="chains" value="H/I/J=1-226"/>
</dbReference>
<dbReference type="PDB" id="7UNF">
    <property type="method" value="EM"/>
    <property type="resolution" value="4.08 A"/>
    <property type="chains" value="b/c/d=1-226"/>
</dbReference>
<dbReference type="PDBsum" id="6WLZ"/>
<dbReference type="PDBsum" id="6WM2"/>
<dbReference type="PDBsum" id="6WM3"/>
<dbReference type="PDBsum" id="6WM4"/>
<dbReference type="PDBsum" id="7U4T"/>
<dbReference type="PDBsum" id="7UNF"/>
<dbReference type="EMDB" id="EMD-21845"/>
<dbReference type="EMDB" id="EMD-21847"/>
<dbReference type="EMDB" id="EMD-21848"/>
<dbReference type="EMDB" id="EMD-21849"/>
<dbReference type="EMDB" id="EMD-26334"/>
<dbReference type="EMDB" id="EMD-26623"/>
<dbReference type="SMR" id="P36543"/>
<dbReference type="BioGRID" id="107012">
    <property type="interactions" value="115"/>
</dbReference>
<dbReference type="ComplexPortal" id="CPX-2470">
    <property type="entry name" value="Vacuolar proton translocating ATPase complex, ATP6V0A1 variant"/>
</dbReference>
<dbReference type="ComplexPortal" id="CPX-6904">
    <property type="entry name" value="Vacuolar proton translocating ATPase complex, ATP6V0A2 variant"/>
</dbReference>
<dbReference type="ComplexPortal" id="CPX-6905">
    <property type="entry name" value="Vacuolar proton translocating ATPase complex, ATP6V0A3 variant"/>
</dbReference>
<dbReference type="ComplexPortal" id="CPX-6912">
    <property type="entry name" value="Vacuolar proton translocating ATPase complex, ATP6V0A4 variant"/>
</dbReference>
<dbReference type="FunCoup" id="P36543">
    <property type="interactions" value="2062"/>
</dbReference>
<dbReference type="IntAct" id="P36543">
    <property type="interactions" value="39"/>
</dbReference>
<dbReference type="MINT" id="P36543"/>
<dbReference type="STRING" id="9606.ENSP00000253413"/>
<dbReference type="DrugBank" id="DB01133">
    <property type="generic name" value="Tiludronic acid"/>
</dbReference>
<dbReference type="TCDB" id="3.A.2.2.4">
    <property type="family name" value="the h+- or na+-translocating f-type, v-type and a-type atpase (f-atpase) superfamily"/>
</dbReference>
<dbReference type="CarbonylDB" id="P36543"/>
<dbReference type="GlyGen" id="P36543">
    <property type="glycosylation" value="1 site, 1 O-linked glycan (1 site)"/>
</dbReference>
<dbReference type="iPTMnet" id="P36543"/>
<dbReference type="MetOSite" id="P36543"/>
<dbReference type="PhosphoSitePlus" id="P36543"/>
<dbReference type="SwissPalm" id="P36543"/>
<dbReference type="BioMuta" id="ATP6V1E1"/>
<dbReference type="DMDM" id="549207"/>
<dbReference type="jPOST" id="P36543"/>
<dbReference type="MassIVE" id="P36543"/>
<dbReference type="PaxDb" id="9606-ENSP00000253413"/>
<dbReference type="PeptideAtlas" id="P36543"/>
<dbReference type="ProteomicsDB" id="2120"/>
<dbReference type="ProteomicsDB" id="55209">
    <molecule id="P36543-1"/>
</dbReference>
<dbReference type="ProteomicsDB" id="55210">
    <molecule id="P36543-2"/>
</dbReference>
<dbReference type="Pumba" id="P36543"/>
<dbReference type="Antibodypedia" id="4024">
    <property type="antibodies" value="191 antibodies from 25 providers"/>
</dbReference>
<dbReference type="DNASU" id="529"/>
<dbReference type="Ensembl" id="ENST00000253413.10">
    <molecule id="P36543-1"/>
    <property type="protein sequence ID" value="ENSP00000253413.5"/>
    <property type="gene ID" value="ENSG00000131100.13"/>
</dbReference>
<dbReference type="Ensembl" id="ENST00000399796.6">
    <molecule id="P36543-3"/>
    <property type="protein sequence ID" value="ENSP00000382694.2"/>
    <property type="gene ID" value="ENSG00000131100.13"/>
</dbReference>
<dbReference type="Ensembl" id="ENST00000399798.6">
    <molecule id="P36543-2"/>
    <property type="protein sequence ID" value="ENSP00000382696.2"/>
    <property type="gene ID" value="ENSG00000131100.13"/>
</dbReference>
<dbReference type="GeneID" id="529"/>
<dbReference type="KEGG" id="hsa:529"/>
<dbReference type="MANE-Select" id="ENST00000253413.10">
    <property type="protein sequence ID" value="ENSP00000253413.5"/>
    <property type="RefSeq nucleotide sequence ID" value="NM_001696.4"/>
    <property type="RefSeq protein sequence ID" value="NP_001687.1"/>
</dbReference>
<dbReference type="UCSC" id="uc002zms.3">
    <molecule id="P36543-1"/>
    <property type="organism name" value="human"/>
</dbReference>
<dbReference type="AGR" id="HGNC:857"/>
<dbReference type="CTD" id="529"/>
<dbReference type="DisGeNET" id="529"/>
<dbReference type="GeneCards" id="ATP6V1E1"/>
<dbReference type="HGNC" id="HGNC:857">
    <property type="gene designation" value="ATP6V1E1"/>
</dbReference>
<dbReference type="HPA" id="ENSG00000131100">
    <property type="expression patterns" value="Low tissue specificity"/>
</dbReference>
<dbReference type="MalaCards" id="ATP6V1E1"/>
<dbReference type="MIM" id="108746">
    <property type="type" value="gene"/>
</dbReference>
<dbReference type="MIM" id="617402">
    <property type="type" value="phenotype"/>
</dbReference>
<dbReference type="neXtProt" id="NX_P36543"/>
<dbReference type="OpenTargets" id="ENSG00000131100"/>
<dbReference type="Orphanet" id="357074">
    <property type="disease" value="Autosomal recessive cutis laxa type 2, classic type"/>
</dbReference>
<dbReference type="PharmGKB" id="PA25158"/>
<dbReference type="VEuPathDB" id="HostDB:ENSG00000131100"/>
<dbReference type="eggNOG" id="KOG1664">
    <property type="taxonomic scope" value="Eukaryota"/>
</dbReference>
<dbReference type="GeneTree" id="ENSGT00390000002730"/>
<dbReference type="HOGENOM" id="CLU_073641_2_0_1"/>
<dbReference type="InParanoid" id="P36543"/>
<dbReference type="OMA" id="YISRDHQ"/>
<dbReference type="OrthoDB" id="10263003at2759"/>
<dbReference type="PAN-GO" id="P36543">
    <property type="GO annotations" value="1 GO annotation based on evolutionary models"/>
</dbReference>
<dbReference type="PhylomeDB" id="P36543"/>
<dbReference type="TreeFam" id="TF313479"/>
<dbReference type="BioCyc" id="MetaCyc:HS05489-MONOMER"/>
<dbReference type="PathwayCommons" id="P36543"/>
<dbReference type="Reactome" id="R-HSA-1222556">
    <property type="pathway name" value="ROS and RNS production in phagocytes"/>
</dbReference>
<dbReference type="Reactome" id="R-HSA-77387">
    <property type="pathway name" value="Insulin receptor recycling"/>
</dbReference>
<dbReference type="Reactome" id="R-HSA-917977">
    <property type="pathway name" value="Transferrin endocytosis and recycling"/>
</dbReference>
<dbReference type="Reactome" id="R-HSA-9639288">
    <property type="pathway name" value="Amino acids regulate mTORC1"/>
</dbReference>
<dbReference type="Reactome" id="R-HSA-983712">
    <property type="pathway name" value="Ion channel transport"/>
</dbReference>
<dbReference type="Reactome" id="R-HSA-9857377">
    <property type="pathway name" value="Regulation of MITF-M-dependent genes involved in lysosome biogenesis and autophagy"/>
</dbReference>
<dbReference type="SignaLink" id="P36543"/>
<dbReference type="BioGRID-ORCS" id="529">
    <property type="hits" value="754 hits in 1159 CRISPR screens"/>
</dbReference>
<dbReference type="CD-CODE" id="FB4E32DD">
    <property type="entry name" value="Presynaptic clusters and postsynaptic densities"/>
</dbReference>
<dbReference type="ChiTaRS" id="ATP6V1E1">
    <property type="organism name" value="human"/>
</dbReference>
<dbReference type="GeneWiki" id="ATP6V1E1"/>
<dbReference type="GenomeRNAi" id="529"/>
<dbReference type="Pharos" id="P36543">
    <property type="development level" value="Tbio"/>
</dbReference>
<dbReference type="PRO" id="PR:P36543"/>
<dbReference type="Proteomes" id="UP000005640">
    <property type="component" value="Chromosome 22"/>
</dbReference>
<dbReference type="RNAct" id="P36543">
    <property type="molecule type" value="protein"/>
</dbReference>
<dbReference type="Bgee" id="ENSG00000131100">
    <property type="expression patterns" value="Expressed in middle temporal gyrus and 216 other cell types or tissues"/>
</dbReference>
<dbReference type="ExpressionAtlas" id="P36543">
    <property type="expression patterns" value="baseline and differential"/>
</dbReference>
<dbReference type="GO" id="GO:0016324">
    <property type="term" value="C:apical plasma membrane"/>
    <property type="evidence" value="ECO:0000250"/>
    <property type="project" value="UniProtKB"/>
</dbReference>
<dbReference type="GO" id="GO:0030665">
    <property type="term" value="C:clathrin-coated vesicle membrane"/>
    <property type="evidence" value="ECO:0007669"/>
    <property type="project" value="UniProtKB-SubCell"/>
</dbReference>
<dbReference type="GO" id="GO:0005829">
    <property type="term" value="C:cytosol"/>
    <property type="evidence" value="ECO:0000250"/>
    <property type="project" value="UniProtKB"/>
</dbReference>
<dbReference type="GO" id="GO:0005768">
    <property type="term" value="C:endosome"/>
    <property type="evidence" value="ECO:0000250"/>
    <property type="project" value="UniProtKB"/>
</dbReference>
<dbReference type="GO" id="GO:0070062">
    <property type="term" value="C:extracellular exosome"/>
    <property type="evidence" value="ECO:0007005"/>
    <property type="project" value="UniProtKB"/>
</dbReference>
<dbReference type="GO" id="GO:0005765">
    <property type="term" value="C:lysosomal membrane"/>
    <property type="evidence" value="ECO:0007005"/>
    <property type="project" value="UniProtKB"/>
</dbReference>
<dbReference type="GO" id="GO:0005902">
    <property type="term" value="C:microvillus"/>
    <property type="evidence" value="ECO:0007669"/>
    <property type="project" value="Ensembl"/>
</dbReference>
<dbReference type="GO" id="GO:0016469">
    <property type="term" value="C:proton-transporting two-sector ATPase complex"/>
    <property type="evidence" value="ECO:0000304"/>
    <property type="project" value="ProtInc"/>
</dbReference>
<dbReference type="GO" id="GO:0030672">
    <property type="term" value="C:synaptic vesicle membrane"/>
    <property type="evidence" value="ECO:0007669"/>
    <property type="project" value="UniProtKB-SubCell"/>
</dbReference>
<dbReference type="GO" id="GO:0000221">
    <property type="term" value="C:vacuolar proton-transporting V-type ATPase, V1 domain"/>
    <property type="evidence" value="ECO:0000314"/>
    <property type="project" value="UniProtKB"/>
</dbReference>
<dbReference type="GO" id="GO:0051117">
    <property type="term" value="F:ATPase binding"/>
    <property type="evidence" value="ECO:0000353"/>
    <property type="project" value="UniProtKB"/>
</dbReference>
<dbReference type="GO" id="GO:0046961">
    <property type="term" value="F:proton-transporting ATPase activity, rotational mechanism"/>
    <property type="evidence" value="ECO:0000318"/>
    <property type="project" value="GO_Central"/>
</dbReference>
<dbReference type="GO" id="GO:1902600">
    <property type="term" value="P:proton transmembrane transport"/>
    <property type="evidence" value="ECO:0000304"/>
    <property type="project" value="ProtInc"/>
</dbReference>
<dbReference type="GO" id="GO:0016241">
    <property type="term" value="P:regulation of macroautophagy"/>
    <property type="evidence" value="ECO:0000303"/>
    <property type="project" value="ParkinsonsUK-UCL"/>
</dbReference>
<dbReference type="GO" id="GO:0097401">
    <property type="term" value="P:synaptic vesicle lumen acidification"/>
    <property type="evidence" value="ECO:0007669"/>
    <property type="project" value="Ensembl"/>
</dbReference>
<dbReference type="FunFam" id="3.30.2320.30:FF:000001">
    <property type="entry name" value="V-type proton atpase subunit e 1"/>
    <property type="match status" value="1"/>
</dbReference>
<dbReference type="Gene3D" id="6.10.250.1620">
    <property type="match status" value="1"/>
</dbReference>
<dbReference type="Gene3D" id="3.30.2320.30">
    <property type="entry name" value="ATP synthase, E subunit, C-terminal"/>
    <property type="match status" value="1"/>
</dbReference>
<dbReference type="HAMAP" id="MF_00311">
    <property type="entry name" value="ATP_synth_E_arch"/>
    <property type="match status" value="1"/>
</dbReference>
<dbReference type="InterPro" id="IPR038495">
    <property type="entry name" value="ATPase_E_C"/>
</dbReference>
<dbReference type="InterPro" id="IPR002842">
    <property type="entry name" value="ATPase_V1_Esu"/>
</dbReference>
<dbReference type="PANTHER" id="PTHR45715">
    <property type="entry name" value="ATPASE H+-TRANSPORTING V1 SUBUNIT E1A-RELATED"/>
    <property type="match status" value="1"/>
</dbReference>
<dbReference type="Pfam" id="PF01991">
    <property type="entry name" value="vATP-synt_E"/>
    <property type="match status" value="1"/>
</dbReference>
<dbReference type="SUPFAM" id="SSF160527">
    <property type="entry name" value="V-type ATPase subunit E-like"/>
    <property type="match status" value="1"/>
</dbReference>
<organism>
    <name type="scientific">Homo sapiens</name>
    <name type="common">Human</name>
    <dbReference type="NCBI Taxonomy" id="9606"/>
    <lineage>
        <taxon>Eukaryota</taxon>
        <taxon>Metazoa</taxon>
        <taxon>Chordata</taxon>
        <taxon>Craniata</taxon>
        <taxon>Vertebrata</taxon>
        <taxon>Euteleostomi</taxon>
        <taxon>Mammalia</taxon>
        <taxon>Eutheria</taxon>
        <taxon>Euarchontoglires</taxon>
        <taxon>Primates</taxon>
        <taxon>Haplorrhini</taxon>
        <taxon>Catarrhini</taxon>
        <taxon>Hominidae</taxon>
        <taxon>Homo</taxon>
    </lineage>
</organism>
<evidence type="ECO:0000250" key="1">
    <source>
        <dbReference type="UniProtKB" id="P50518"/>
    </source>
</evidence>
<evidence type="ECO:0000250" key="2">
    <source>
        <dbReference type="UniProtKB" id="Q6PCU2"/>
    </source>
</evidence>
<evidence type="ECO:0000269" key="3">
    <source>
    </source>
</evidence>
<evidence type="ECO:0000269" key="4">
    <source>
    </source>
</evidence>
<evidence type="ECO:0000269" key="5">
    <source>
    </source>
</evidence>
<evidence type="ECO:0000269" key="6">
    <source>
    </source>
</evidence>
<evidence type="ECO:0000269" key="7">
    <source>
    </source>
</evidence>
<evidence type="ECO:0000269" key="8">
    <source>
    </source>
</evidence>
<evidence type="ECO:0000269" key="9">
    <source>
    </source>
</evidence>
<evidence type="ECO:0000303" key="10">
    <source>
    </source>
</evidence>
<evidence type="ECO:0000303" key="11">
    <source>
    </source>
</evidence>
<evidence type="ECO:0000305" key="12"/>
<evidence type="ECO:0007744" key="13">
    <source>
        <dbReference type="PDB" id="6WLZ"/>
    </source>
</evidence>
<evidence type="ECO:0007744" key="14">
    <source>
        <dbReference type="PDB" id="6WM2"/>
    </source>
</evidence>
<evidence type="ECO:0007744" key="15">
    <source>
        <dbReference type="PDB" id="6WM3"/>
    </source>
</evidence>
<evidence type="ECO:0007744" key="16">
    <source>
        <dbReference type="PDB" id="6WM4"/>
    </source>
</evidence>
<evidence type="ECO:0007744" key="17">
    <source>
    </source>
</evidence>
<evidence type="ECO:0007744" key="18">
    <source>
    </source>
</evidence>
<evidence type="ECO:0007829" key="19">
    <source>
        <dbReference type="PDB" id="6WLZ"/>
    </source>
</evidence>
<evidence type="ECO:0007829" key="20">
    <source>
        <dbReference type="PDB" id="6WM2"/>
    </source>
</evidence>
<gene>
    <name type="primary">ATP6V1E1</name>
    <name type="synonym">ATP6E</name>
    <name type="synonym">ATP6E2</name>
</gene>
<comment type="function">
    <text evidence="9 11">Subunit of the V1 complex of vacuolar(H+)-ATPase (V-ATPase), a multisubunit enzyme composed of a peripheral complex (V1) that hydrolyzes ATP and a membrane integral complex (V0) that translocates protons (PubMed:32001091, PubMed:33065002). V-ATPase is responsible for acidifying and maintaining the pH of intracellular compartments and in some cell types, is targeted to the plasma membrane, where it is responsible for acidifying the extracellular environment (PubMed:32001091).</text>
</comment>
<comment type="subunit">
    <text evidence="1 3 6 9">V-ATPase is a heteromultimeric enzyme made up of two complexes: the ATP-hydrolytic V1 complex and the proton translocation V0 complex (PubMed:33065002). The V1 complex consists of three catalytic AB heterodimers that form a heterohexamer, three peripheral stalks each consisting of EG heterodimers, one central rotor including subunits D and F, and the regulatory subunits C and H (PubMed:33065002). The proton translocation complex V0 consists of the proton transport subunit a, a ring of proteolipid subunits c9c'', rotary subunit d, subunits e and f, and the accessory subunits ATP6AP1/Ac45 and ATP6AP2/PRR (PubMed:33065002). Interacts with RABL2/RABL2A; binds preferentially to GTP-bound RABL2 (By similarity). Interacts with ALDOC (PubMed:11399750). Interacts with RAB11B (PubMed:20717956).</text>
</comment>
<comment type="interaction">
    <interactant intactId="EBI-348639">
        <id>P36543</id>
    </interactant>
    <interactant intactId="EBI-711802">
        <id>O75348</id>
        <label>ATP6V1G1</label>
    </interactant>
    <organismsDiffer>false</organismsDiffer>
    <experiments>3</experiments>
</comment>
<comment type="subcellular location">
    <subcellularLocation>
        <location evidence="8">Apical cell membrane</location>
        <topology evidence="12">Peripheral membrane protein</topology>
    </subcellularLocation>
    <subcellularLocation>
        <location evidence="2">Cytoplasmic vesicle</location>
        <location evidence="2">Secretory vesicle</location>
        <location evidence="2">Synaptic vesicle membrane</location>
        <topology evidence="12">Peripheral membrane protein</topology>
    </subcellularLocation>
    <subcellularLocation>
        <location evidence="2">Cytoplasmic vesicle</location>
        <location evidence="2">Clathrin-coated vesicle membrane</location>
        <topology evidence="12">Peripheral membrane protein</topology>
    </subcellularLocation>
</comment>
<comment type="alternative products">
    <event type="alternative splicing"/>
    <isoform>
        <id>P36543-1</id>
        <name>1</name>
        <sequence type="displayed"/>
    </isoform>
    <isoform>
        <id>P36543-2</id>
        <name>2</name>
        <sequence type="described" ref="VSP_042925"/>
    </isoform>
    <isoform>
        <id>P36543-3</id>
        <name>3</name>
        <sequence type="described" ref="VSP_044589"/>
    </isoform>
</comment>
<comment type="tissue specificity">
    <text evidence="4 7 8">Kidney; localizes to early distal nephron, encompassing thick ascending limbs and distal convoluted tubules (at protein level) (PubMed:29993276). Ubiquitous (PubMed:12036578). High expression in the skin (PubMed:28065471).</text>
</comment>
<comment type="disease" evidence="7">
    <disease id="DI-04974">
        <name>Cutis laxa, autosomal recessive, 2C</name>
        <acronym>ARCL2C</acronym>
        <description>A form of cutis laxa, a disorder characterized by an excessive congenital skin wrinkling, a large fontanelle with delayed closure, a typical facial appearance with downslanting palpebral fissures, and a general connective tissue weakness. Most ARCL2C patients exhibit severe hypotonia as well as cardiovascular involvement.</description>
        <dbReference type="MIM" id="617402"/>
    </disease>
    <text>The disease is caused by variants affecting the gene represented in this entry.</text>
</comment>
<comment type="similarity">
    <text evidence="12">Belongs to the V-ATPase E subunit family.</text>
</comment>
<sequence length="226" mass="26145">MALSDADVQKQIKHMMAFIEQEANEKAEEIDAKAEEEFNIEKGRLVQTQRLKIMEYYEKKEKQIEQQKKIQMSNLMNQARLKVLRARDDLITDLLNEAKQRLSKVVKDTTRYQVLLDGLVLQGLYQLLEPRMIVRCRKQDFPLVKAAVQKAIPMYKIATKNDVDVQIDQESYLPEDIAGGVEIYNGDRKIKVSNTLESRLDLIAQQMMPEVRGALFGANANRKFLD</sequence>
<protein>
    <recommendedName>
        <fullName>V-type proton ATPase subunit E 1</fullName>
        <shortName>V-ATPase subunit E 1</shortName>
    </recommendedName>
    <alternativeName>
        <fullName>V-ATPase 31 kDa subunit</fullName>
        <shortName>p31</shortName>
    </alternativeName>
    <alternativeName>
        <fullName>Vacuolar proton pump subunit E 1</fullName>
    </alternativeName>
</protein>
<keyword id="KW-0002">3D-structure</keyword>
<keyword id="KW-0007">Acetylation</keyword>
<keyword id="KW-0025">Alternative splicing</keyword>
<keyword id="KW-1003">Cell membrane</keyword>
<keyword id="KW-0968">Cytoplasmic vesicle</keyword>
<keyword id="KW-0903">Direct protein sequencing</keyword>
<keyword id="KW-0225">Disease variant</keyword>
<keyword id="KW-0375">Hydrogen ion transport</keyword>
<keyword id="KW-0406">Ion transport</keyword>
<keyword id="KW-0472">Membrane</keyword>
<keyword id="KW-0597">Phosphoprotein</keyword>
<keyword id="KW-1267">Proteomics identification</keyword>
<keyword id="KW-1185">Reference proteome</keyword>
<keyword id="KW-0770">Synapse</keyword>
<keyword id="KW-0813">Transport</keyword>
<accession>P36543</accession>
<accession>A8MUE4</accession>
<accession>A8MUN4</accession>
<name>VATE1_HUMAN</name>
<reference key="1">
    <citation type="journal article" date="1992" name="J. Biol. Chem.">
        <title>Immunologic evidence that vacuolar H+ ATPases with heterogeneous forms of Mr = 31,000 subunit have different membrane distributions in mammalian kidney.</title>
        <authorList>
            <person name="Hemken P."/>
            <person name="Guo X.-L."/>
            <person name="Wang Z.-Q."/>
            <person name="Zhang K."/>
            <person name="Gluck S."/>
        </authorList>
    </citation>
    <scope>NUCLEOTIDE SEQUENCE [MRNA] (ISOFORM 1)</scope>
</reference>
<reference key="2">
    <citation type="journal article" date="1994" name="Hum. Mol. Genet.">
        <title>The E subunit of vacuolar H(+)-ATPase localizes close to the centromere on human chromosome 22.</title>
        <authorList>
            <person name="Baud V."/>
            <person name="Mears A."/>
            <person name="Lamour V."/>
            <person name="Scamps C."/>
            <person name="McDermid A."/>
            <person name="Lipinski M."/>
        </authorList>
    </citation>
    <scope>NUCLEOTIDE SEQUENCE [MRNA] (ISOFORM 1)</scope>
</reference>
<reference key="3">
    <citation type="journal article" date="1993" name="Biochem. Biophys. Res. Commun.">
        <title>Cloning and tissue distribution of subunits C, D, and E of the human vacuolar H(+)-ATPase.</title>
        <authorList>
            <person name="van Hille B."/>
            <person name="Vanek M."/>
            <person name="Richener H."/>
            <person name="Green J.R."/>
            <person name="Bilbe G."/>
        </authorList>
    </citation>
    <scope>NUCLEOTIDE SEQUENCE [MRNA] (ISOFORM 1)</scope>
    <source>
        <tissue>Osteoclastoma</tissue>
    </source>
</reference>
<reference key="4">
    <citation type="journal article" date="2004" name="Genome Biol.">
        <title>A genome annotation-driven approach to cloning the human ORFeome.</title>
        <authorList>
            <person name="Collins J.E."/>
            <person name="Wright C.L."/>
            <person name="Edwards C.A."/>
            <person name="Davis M.P."/>
            <person name="Grinham J.A."/>
            <person name="Cole C.G."/>
            <person name="Goward M.E."/>
            <person name="Aguado B."/>
            <person name="Mallya M."/>
            <person name="Mokrab Y."/>
            <person name="Huckle E.J."/>
            <person name="Beare D.M."/>
            <person name="Dunham I."/>
        </authorList>
    </citation>
    <scope>NUCLEOTIDE SEQUENCE [LARGE SCALE MRNA] (ISOFORM 1)</scope>
</reference>
<reference key="5">
    <citation type="journal article" date="2004" name="Nat. Genet.">
        <title>Complete sequencing and characterization of 21,243 full-length human cDNAs.</title>
        <authorList>
            <person name="Ota T."/>
            <person name="Suzuki Y."/>
            <person name="Nishikawa T."/>
            <person name="Otsuki T."/>
            <person name="Sugiyama T."/>
            <person name="Irie R."/>
            <person name="Wakamatsu A."/>
            <person name="Hayashi K."/>
            <person name="Sato H."/>
            <person name="Nagai K."/>
            <person name="Kimura K."/>
            <person name="Makita H."/>
            <person name="Sekine M."/>
            <person name="Obayashi M."/>
            <person name="Nishi T."/>
            <person name="Shibahara T."/>
            <person name="Tanaka T."/>
            <person name="Ishii S."/>
            <person name="Yamamoto J."/>
            <person name="Saito K."/>
            <person name="Kawai Y."/>
            <person name="Isono Y."/>
            <person name="Nakamura Y."/>
            <person name="Nagahari K."/>
            <person name="Murakami K."/>
            <person name="Yasuda T."/>
            <person name="Iwayanagi T."/>
            <person name="Wagatsuma M."/>
            <person name="Shiratori A."/>
            <person name="Sudo H."/>
            <person name="Hosoiri T."/>
            <person name="Kaku Y."/>
            <person name="Kodaira H."/>
            <person name="Kondo H."/>
            <person name="Sugawara M."/>
            <person name="Takahashi M."/>
            <person name="Kanda K."/>
            <person name="Yokoi T."/>
            <person name="Furuya T."/>
            <person name="Kikkawa E."/>
            <person name="Omura Y."/>
            <person name="Abe K."/>
            <person name="Kamihara K."/>
            <person name="Katsuta N."/>
            <person name="Sato K."/>
            <person name="Tanikawa M."/>
            <person name="Yamazaki M."/>
            <person name="Ninomiya K."/>
            <person name="Ishibashi T."/>
            <person name="Yamashita H."/>
            <person name="Murakawa K."/>
            <person name="Fujimori K."/>
            <person name="Tanai H."/>
            <person name="Kimata M."/>
            <person name="Watanabe M."/>
            <person name="Hiraoka S."/>
            <person name="Chiba Y."/>
            <person name="Ishida S."/>
            <person name="Ono Y."/>
            <person name="Takiguchi S."/>
            <person name="Watanabe S."/>
            <person name="Yosida M."/>
            <person name="Hotuta T."/>
            <person name="Kusano J."/>
            <person name="Kanehori K."/>
            <person name="Takahashi-Fujii A."/>
            <person name="Hara H."/>
            <person name="Tanase T.-O."/>
            <person name="Nomura Y."/>
            <person name="Togiya S."/>
            <person name="Komai F."/>
            <person name="Hara R."/>
            <person name="Takeuchi K."/>
            <person name="Arita M."/>
            <person name="Imose N."/>
            <person name="Musashino K."/>
            <person name="Yuuki H."/>
            <person name="Oshima A."/>
            <person name="Sasaki N."/>
            <person name="Aotsuka S."/>
            <person name="Yoshikawa Y."/>
            <person name="Matsunawa H."/>
            <person name="Ichihara T."/>
            <person name="Shiohata N."/>
            <person name="Sano S."/>
            <person name="Moriya S."/>
            <person name="Momiyama H."/>
            <person name="Satoh N."/>
            <person name="Takami S."/>
            <person name="Terashima Y."/>
            <person name="Suzuki O."/>
            <person name="Nakagawa S."/>
            <person name="Senoh A."/>
            <person name="Mizoguchi H."/>
            <person name="Goto Y."/>
            <person name="Shimizu F."/>
            <person name="Wakebe H."/>
            <person name="Hishigaki H."/>
            <person name="Watanabe T."/>
            <person name="Sugiyama A."/>
            <person name="Takemoto M."/>
            <person name="Kawakami B."/>
            <person name="Yamazaki M."/>
            <person name="Watanabe K."/>
            <person name="Kumagai A."/>
            <person name="Itakura S."/>
            <person name="Fukuzumi Y."/>
            <person name="Fujimori Y."/>
            <person name="Komiyama M."/>
            <person name="Tashiro H."/>
            <person name="Tanigami A."/>
            <person name="Fujiwara T."/>
            <person name="Ono T."/>
            <person name="Yamada K."/>
            <person name="Fujii Y."/>
            <person name="Ozaki K."/>
            <person name="Hirao M."/>
            <person name="Ohmori Y."/>
            <person name="Kawabata A."/>
            <person name="Hikiji T."/>
            <person name="Kobatake N."/>
            <person name="Inagaki H."/>
            <person name="Ikema Y."/>
            <person name="Okamoto S."/>
            <person name="Okitani R."/>
            <person name="Kawakami T."/>
            <person name="Noguchi S."/>
            <person name="Itoh T."/>
            <person name="Shigeta K."/>
            <person name="Senba T."/>
            <person name="Matsumura K."/>
            <person name="Nakajima Y."/>
            <person name="Mizuno T."/>
            <person name="Morinaga M."/>
            <person name="Sasaki M."/>
            <person name="Togashi T."/>
            <person name="Oyama M."/>
            <person name="Hata H."/>
            <person name="Watanabe M."/>
            <person name="Komatsu T."/>
            <person name="Mizushima-Sugano J."/>
            <person name="Satoh T."/>
            <person name="Shirai Y."/>
            <person name="Takahashi Y."/>
            <person name="Nakagawa K."/>
            <person name="Okumura K."/>
            <person name="Nagase T."/>
            <person name="Nomura N."/>
            <person name="Kikuchi H."/>
            <person name="Masuho Y."/>
            <person name="Yamashita R."/>
            <person name="Nakai K."/>
            <person name="Yada T."/>
            <person name="Nakamura Y."/>
            <person name="Ohara O."/>
            <person name="Isogai T."/>
            <person name="Sugano S."/>
        </authorList>
    </citation>
    <scope>NUCLEOTIDE SEQUENCE [LARGE SCALE MRNA] (ISOFORMS 2 AND 3)</scope>
    <source>
        <tissue>Brain</tissue>
        <tissue>Cerebellum</tissue>
    </source>
</reference>
<reference key="6">
    <citation type="journal article" date="1999" name="Nature">
        <title>The DNA sequence of human chromosome 22.</title>
        <authorList>
            <person name="Dunham I."/>
            <person name="Hunt A.R."/>
            <person name="Collins J.E."/>
            <person name="Bruskiewich R."/>
            <person name="Beare D.M."/>
            <person name="Clamp M."/>
            <person name="Smink L.J."/>
            <person name="Ainscough R."/>
            <person name="Almeida J.P."/>
            <person name="Babbage A.K."/>
            <person name="Bagguley C."/>
            <person name="Bailey J."/>
            <person name="Barlow K.F."/>
            <person name="Bates K.N."/>
            <person name="Beasley O.P."/>
            <person name="Bird C.P."/>
            <person name="Blakey S.E."/>
            <person name="Bridgeman A.M."/>
            <person name="Buck D."/>
            <person name="Burgess J."/>
            <person name="Burrill W.D."/>
            <person name="Burton J."/>
            <person name="Carder C."/>
            <person name="Carter N.P."/>
            <person name="Chen Y."/>
            <person name="Clark G."/>
            <person name="Clegg S.M."/>
            <person name="Cobley V.E."/>
            <person name="Cole C.G."/>
            <person name="Collier R.E."/>
            <person name="Connor R."/>
            <person name="Conroy D."/>
            <person name="Corby N.R."/>
            <person name="Coville G.J."/>
            <person name="Cox A.V."/>
            <person name="Davis J."/>
            <person name="Dawson E."/>
            <person name="Dhami P.D."/>
            <person name="Dockree C."/>
            <person name="Dodsworth S.J."/>
            <person name="Durbin R.M."/>
            <person name="Ellington A.G."/>
            <person name="Evans K.L."/>
            <person name="Fey J.M."/>
            <person name="Fleming K."/>
            <person name="French L."/>
            <person name="Garner A.A."/>
            <person name="Gilbert J.G.R."/>
            <person name="Goward M.E."/>
            <person name="Grafham D.V."/>
            <person name="Griffiths M.N.D."/>
            <person name="Hall C."/>
            <person name="Hall R.E."/>
            <person name="Hall-Tamlyn G."/>
            <person name="Heathcott R.W."/>
            <person name="Ho S."/>
            <person name="Holmes S."/>
            <person name="Hunt S.E."/>
            <person name="Jones M.C."/>
            <person name="Kershaw J."/>
            <person name="Kimberley A.M."/>
            <person name="King A."/>
            <person name="Laird G.K."/>
            <person name="Langford C.F."/>
            <person name="Leversha M.A."/>
            <person name="Lloyd C."/>
            <person name="Lloyd D.M."/>
            <person name="Martyn I.D."/>
            <person name="Mashreghi-Mohammadi M."/>
            <person name="Matthews L.H."/>
            <person name="Mccann O.T."/>
            <person name="Mcclay J."/>
            <person name="Mclaren S."/>
            <person name="McMurray A.A."/>
            <person name="Milne S.A."/>
            <person name="Mortimore B.J."/>
            <person name="Odell C.N."/>
            <person name="Pavitt R."/>
            <person name="Pearce A.V."/>
            <person name="Pearson D."/>
            <person name="Phillimore B.J.C.T."/>
            <person name="Phillips S.H."/>
            <person name="Plumb R.W."/>
            <person name="Ramsay H."/>
            <person name="Ramsey Y."/>
            <person name="Rogers L."/>
            <person name="Ross M.T."/>
            <person name="Scott C.E."/>
            <person name="Sehra H.K."/>
            <person name="Skuce C.D."/>
            <person name="Smalley S."/>
            <person name="Smith M.L."/>
            <person name="Soderlund C."/>
            <person name="Spragon L."/>
            <person name="Steward C.A."/>
            <person name="Sulston J.E."/>
            <person name="Swann R.M."/>
            <person name="Vaudin M."/>
            <person name="Wall M."/>
            <person name="Wallis J.M."/>
            <person name="Whiteley M.N."/>
            <person name="Willey D.L."/>
            <person name="Williams L."/>
            <person name="Williams S.A."/>
            <person name="Williamson H."/>
            <person name="Wilmer T.E."/>
            <person name="Wilming L."/>
            <person name="Wright C.L."/>
            <person name="Hubbard T."/>
            <person name="Bentley D.R."/>
            <person name="Beck S."/>
            <person name="Rogers J."/>
            <person name="Shimizu N."/>
            <person name="Minoshima S."/>
            <person name="Kawasaki K."/>
            <person name="Sasaki T."/>
            <person name="Asakawa S."/>
            <person name="Kudoh J."/>
            <person name="Shintani A."/>
            <person name="Shibuya K."/>
            <person name="Yoshizaki Y."/>
            <person name="Aoki N."/>
            <person name="Mitsuyama S."/>
            <person name="Roe B.A."/>
            <person name="Chen F."/>
            <person name="Chu L."/>
            <person name="Crabtree J."/>
            <person name="Deschamps S."/>
            <person name="Do A."/>
            <person name="Do T."/>
            <person name="Dorman A."/>
            <person name="Fang F."/>
            <person name="Fu Y."/>
            <person name="Hu P."/>
            <person name="Hua A."/>
            <person name="Kenton S."/>
            <person name="Lai H."/>
            <person name="Lao H.I."/>
            <person name="Lewis J."/>
            <person name="Lewis S."/>
            <person name="Lin S.-P."/>
            <person name="Loh P."/>
            <person name="Malaj E."/>
            <person name="Nguyen T."/>
            <person name="Pan H."/>
            <person name="Phan S."/>
            <person name="Qi S."/>
            <person name="Qian Y."/>
            <person name="Ray L."/>
            <person name="Ren Q."/>
            <person name="Shaull S."/>
            <person name="Sloan D."/>
            <person name="Song L."/>
            <person name="Wang Q."/>
            <person name="Wang Y."/>
            <person name="Wang Z."/>
            <person name="White J."/>
            <person name="Willingham D."/>
            <person name="Wu H."/>
            <person name="Yao Z."/>
            <person name="Zhan M."/>
            <person name="Zhang G."/>
            <person name="Chissoe S."/>
            <person name="Murray J."/>
            <person name="Miller N."/>
            <person name="Minx P."/>
            <person name="Fulton R."/>
            <person name="Johnson D."/>
            <person name="Bemis G."/>
            <person name="Bentley D."/>
            <person name="Bradshaw H."/>
            <person name="Bourne S."/>
            <person name="Cordes M."/>
            <person name="Du Z."/>
            <person name="Fulton L."/>
            <person name="Goela D."/>
            <person name="Graves T."/>
            <person name="Hawkins J."/>
            <person name="Hinds K."/>
            <person name="Kemp K."/>
            <person name="Latreille P."/>
            <person name="Layman D."/>
            <person name="Ozersky P."/>
            <person name="Rohlfing T."/>
            <person name="Scheet P."/>
            <person name="Walker C."/>
            <person name="Wamsley A."/>
            <person name="Wohldmann P."/>
            <person name="Pepin K."/>
            <person name="Nelson J."/>
            <person name="Korf I."/>
            <person name="Bedell J.A."/>
            <person name="Hillier L.W."/>
            <person name="Mardis E."/>
            <person name="Waterston R."/>
            <person name="Wilson R."/>
            <person name="Emanuel B.S."/>
            <person name="Shaikh T."/>
            <person name="Kurahashi H."/>
            <person name="Saitta S."/>
            <person name="Budarf M.L."/>
            <person name="McDermid H.E."/>
            <person name="Johnson A."/>
            <person name="Wong A.C.C."/>
            <person name="Morrow B.E."/>
            <person name="Edelmann L."/>
            <person name="Kim U.J."/>
            <person name="Shizuya H."/>
            <person name="Simon M.I."/>
            <person name="Dumanski J.P."/>
            <person name="Peyrard M."/>
            <person name="Kedra D."/>
            <person name="Seroussi E."/>
            <person name="Fransson I."/>
            <person name="Tapia I."/>
            <person name="Bruder C.E."/>
            <person name="O'Brien K.P."/>
            <person name="Wilkinson P."/>
            <person name="Bodenteich A."/>
            <person name="Hartman K."/>
            <person name="Hu X."/>
            <person name="Khan A.S."/>
            <person name="Lane L."/>
            <person name="Tilahun Y."/>
            <person name="Wright H."/>
        </authorList>
    </citation>
    <scope>NUCLEOTIDE SEQUENCE [LARGE SCALE GENOMIC DNA]</scope>
</reference>
<reference key="7">
    <citation type="journal article" date="2004" name="Genome Res.">
        <title>The status, quality, and expansion of the NIH full-length cDNA project: the Mammalian Gene Collection (MGC).</title>
        <authorList>
            <consortium name="The MGC Project Team"/>
        </authorList>
    </citation>
    <scope>NUCLEOTIDE SEQUENCE [LARGE SCALE MRNA] (ISOFORM 1)</scope>
    <source>
        <tissue>Lung</tissue>
    </source>
</reference>
<reference key="8">
    <citation type="submission" date="2007-03" db="UniProtKB">
        <authorList>
            <person name="Lubec G."/>
            <person name="Vishwanath V."/>
        </authorList>
    </citation>
    <scope>PROTEIN SEQUENCE OF 112-131</scope>
    <scope>IDENTIFICATION BY MASS SPECTROMETRY</scope>
    <source>
        <tissue>Brain</tissue>
        <tissue>Cajal-Retzius cell</tissue>
    </source>
</reference>
<reference key="9">
    <citation type="journal article" date="2001" name="J. Biol. Chem.">
        <title>Interaction between aldolase and vacuolar H+-ATPase: evidence for direct coupling of glycolysis to the ATP-hydrolyzing proton pump.</title>
        <authorList>
            <person name="Lu M."/>
            <person name="Holliday L.S."/>
            <person name="Zhang L."/>
            <person name="Dunn W.A. Jr."/>
            <person name="Gluck S.L."/>
        </authorList>
    </citation>
    <scope>INTERACTION WITH ALDOC</scope>
</reference>
<reference key="10">
    <citation type="journal article" date="2002" name="Gene">
        <title>A human gene, ATP6E1, encoding a testis-specific isoform of H(+)-ATPase subunit E.</title>
        <authorList>
            <person name="Imai-Senga Y."/>
            <person name="Sun-Wada G.H."/>
            <person name="Wada Y."/>
            <person name="Futai M."/>
        </authorList>
    </citation>
    <scope>TISSUE SPECIFICITY</scope>
</reference>
<reference key="11">
    <citation type="journal article" date="2009" name="Anal. Chem.">
        <title>Lys-N and trypsin cover complementary parts of the phosphoproteome in a refined SCX-based approach.</title>
        <authorList>
            <person name="Gauci S."/>
            <person name="Helbig A.O."/>
            <person name="Slijper M."/>
            <person name="Krijgsveld J."/>
            <person name="Heck A.J."/>
            <person name="Mohammed S."/>
        </authorList>
    </citation>
    <scope>ACETYLATION [LARGE SCALE ANALYSIS] AT ALA-2</scope>
    <scope>CLEAVAGE OF INITIATOR METHIONINE [LARGE SCALE ANALYSIS]</scope>
    <scope>IDENTIFICATION BY MASS SPECTROMETRY [LARGE SCALE ANALYSIS]</scope>
</reference>
<reference key="12">
    <citation type="journal article" date="2011" name="BMC Syst. Biol.">
        <title>Initial characterization of the human central proteome.</title>
        <authorList>
            <person name="Burkard T.R."/>
            <person name="Planyavsky M."/>
            <person name="Kaupe I."/>
            <person name="Breitwieser F.P."/>
            <person name="Buerckstuemmer T."/>
            <person name="Bennett K.L."/>
            <person name="Superti-Furga G."/>
            <person name="Colinge J."/>
        </authorList>
    </citation>
    <scope>IDENTIFICATION BY MASS SPECTROMETRY [LARGE SCALE ANALYSIS]</scope>
</reference>
<reference key="13">
    <citation type="journal article" date="2011" name="J. Cell. Physiol.">
        <title>Rab11b and its effector Rip11 regulate the acidosis-induced traffic of V-ATPase in salivary ducts.</title>
        <authorList>
            <person name="Oehlke O."/>
            <person name="Martin H.W."/>
            <person name="Osterberg N."/>
            <person name="Roussa E."/>
        </authorList>
    </citation>
    <scope>INTERACTION WITH RAB11B</scope>
</reference>
<reference key="14">
    <citation type="journal article" date="2014" name="J. Proteomics">
        <title>An enzyme assisted RP-RPLC approach for in-depth analysis of human liver phosphoproteome.</title>
        <authorList>
            <person name="Bian Y."/>
            <person name="Song C."/>
            <person name="Cheng K."/>
            <person name="Dong M."/>
            <person name="Wang F."/>
            <person name="Huang J."/>
            <person name="Sun D."/>
            <person name="Wang L."/>
            <person name="Ye M."/>
            <person name="Zou H."/>
        </authorList>
    </citation>
    <scope>IDENTIFICATION BY MASS SPECTROMETRY [LARGE SCALE ANALYSIS]</scope>
    <source>
        <tissue>Liver</tissue>
    </source>
</reference>
<reference key="15">
    <citation type="journal article" date="2015" name="Proteomics">
        <title>N-terminome analysis of the human mitochondrial proteome.</title>
        <authorList>
            <person name="Vaca Jacome A.S."/>
            <person name="Rabilloud T."/>
            <person name="Schaeffer-Reiss C."/>
            <person name="Rompais M."/>
            <person name="Ayoub D."/>
            <person name="Lane L."/>
            <person name="Bairoch A."/>
            <person name="Van Dorsselaer A."/>
            <person name="Carapito C."/>
        </authorList>
    </citation>
    <scope>ACETYLATION [LARGE SCALE ANALYSIS] AT ALA-2</scope>
    <scope>CLEAVAGE OF INITIATOR METHIONINE [LARGE SCALE ANALYSIS]</scope>
    <scope>IDENTIFICATION BY MASS SPECTROMETRY [LARGE SCALE ANALYSIS]</scope>
</reference>
<reference key="16">
    <citation type="journal article" date="2017" name="Am. J. Hum. Genet.">
        <title>Mutations in ATP6V1E1 or ATP6V1A cause autosomal-recessive cutis laxa.</title>
        <authorList>
            <person name="Van Damme T."/>
            <person name="Gardeitchik T."/>
            <person name="Mohamed M."/>
            <person name="Guerrero-Castillo S."/>
            <person name="Freisinger P."/>
            <person name="Guillemyn B."/>
            <person name="Kariminejad A."/>
            <person name="Dalloyaux D."/>
            <person name="van Kraaij S."/>
            <person name="Lefeber D.J."/>
            <person name="Syx D."/>
            <person name="Steyaert W."/>
            <person name="De Rycke R."/>
            <person name="Hoischen A."/>
            <person name="Kamsteeg E.J."/>
            <person name="Wong S.Y."/>
            <person name="van Scherpenzeel M."/>
            <person name="Jamali P."/>
            <person name="Brandt U."/>
            <person name="Nijtmans L."/>
            <person name="Korenke G.C."/>
            <person name="Chung B.H."/>
            <person name="Mak C.C."/>
            <person name="Hausser I."/>
            <person name="Kornak U."/>
            <person name="Fischer-Zirnsak B."/>
            <person name="Strom T.M."/>
            <person name="Meitinger T."/>
            <person name="Alanay Y."/>
            <person name="Utine G.E."/>
            <person name="Leung P.K."/>
            <person name="Ghaderi-Sohi S."/>
            <person name="Coucke P."/>
            <person name="Symoens S."/>
            <person name="De Paepe A."/>
            <person name="Thiel C."/>
            <person name="Haack T.B."/>
            <person name="Malfait F."/>
            <person name="Morava E."/>
            <person name="Callewaert B."/>
            <person name="Wevers R.A."/>
        </authorList>
    </citation>
    <scope>INVOLVEMENT IN ARCL2C</scope>
    <scope>TISSUE SPECIFICITY</scope>
    <scope>VARIANTS ARCL2C PRO-128 AND TRP-212</scope>
</reference>
<reference key="17">
    <citation type="journal article" date="2018" name="Am. J. Physiol.">
        <title>H+-ATPase B1 subunit localizes to thick ascending limb and distal convoluted tubule of rodent and human kidney.</title>
        <authorList>
            <person name="Frische S."/>
            <person name="Chambrey R."/>
            <person name="Trepiccione F."/>
            <person name="Zamani R."/>
            <person name="Marcussen N."/>
            <person name="Alexander R.T."/>
            <person name="Skjoedt K."/>
            <person name="Svenningsen P."/>
            <person name="Dimke H."/>
        </authorList>
    </citation>
    <scope>SUBCELLULAR LOCATION</scope>
    <scope>TISSUE SPECIFICITY</scope>
</reference>
<reference key="18">
    <citation type="journal article" date="2020" name="Trends Biochem. Sci.">
        <title>Structure and Roles of V-type ATPases.</title>
        <authorList>
            <person name="Vasanthakumar T."/>
            <person name="Rubinstein J.L."/>
        </authorList>
    </citation>
    <scope>REVIEW</scope>
</reference>
<reference evidence="13 14 15 16" key="19">
    <citation type="journal article" date="2020" name="Mol. Cell">
        <title>Structures of a Complete Human V-ATPase Reveal Mechanisms of Its Assembly.</title>
        <authorList>
            <person name="Wang L."/>
            <person name="Wu D."/>
            <person name="Robinson C.V."/>
            <person name="Wu H."/>
            <person name="Fu T.M."/>
        </authorList>
    </citation>
    <scope>STRUCTURE BY ELECTRON MICROSCOPY (2.90 ANGSTROMS)</scope>
    <scope>FUNCTION</scope>
    <scope>IDENTIFICATION IN THE V-ATPASE COMPLEX</scope>
</reference>
<reference key="20">
    <citation type="journal article" date="2006" name="Science">
        <title>The consensus coding sequences of human breast and colorectal cancers.</title>
        <authorList>
            <person name="Sjoeblom T."/>
            <person name="Jones S."/>
            <person name="Wood L.D."/>
            <person name="Parsons D.W."/>
            <person name="Lin J."/>
            <person name="Barber T.D."/>
            <person name="Mandelker D."/>
            <person name="Leary R.J."/>
            <person name="Ptak J."/>
            <person name="Silliman N."/>
            <person name="Szabo S."/>
            <person name="Buckhaults P."/>
            <person name="Farrell C."/>
            <person name="Meeh P."/>
            <person name="Markowitz S.D."/>
            <person name="Willis J."/>
            <person name="Dawson D."/>
            <person name="Willson J.K.V."/>
            <person name="Gazdar A.F."/>
            <person name="Hartigan J."/>
            <person name="Wu L."/>
            <person name="Liu C."/>
            <person name="Parmigiani G."/>
            <person name="Park B.H."/>
            <person name="Bachman K.E."/>
            <person name="Papadopoulos N."/>
            <person name="Vogelstein B."/>
            <person name="Kinzler K.W."/>
            <person name="Velculescu V.E."/>
        </authorList>
    </citation>
    <scope>VARIANT [LARGE SCALE ANALYSIS] GLY-50</scope>
</reference>